<proteinExistence type="inferred from homology"/>
<accession>B4EBK9</accession>
<reference key="1">
    <citation type="journal article" date="2009" name="J. Bacteriol.">
        <title>The genome of Burkholderia cenocepacia J2315, an epidemic pathogen of cystic fibrosis patients.</title>
        <authorList>
            <person name="Holden M.T."/>
            <person name="Seth-Smith H.M."/>
            <person name="Crossman L.C."/>
            <person name="Sebaihia M."/>
            <person name="Bentley S.D."/>
            <person name="Cerdeno-Tarraga A.M."/>
            <person name="Thomson N.R."/>
            <person name="Bason N."/>
            <person name="Quail M.A."/>
            <person name="Sharp S."/>
            <person name="Cherevach I."/>
            <person name="Churcher C."/>
            <person name="Goodhead I."/>
            <person name="Hauser H."/>
            <person name="Holroyd N."/>
            <person name="Mungall K."/>
            <person name="Scott P."/>
            <person name="Walker D."/>
            <person name="White B."/>
            <person name="Rose H."/>
            <person name="Iversen P."/>
            <person name="Mil-Homens D."/>
            <person name="Rocha E.P."/>
            <person name="Fialho A.M."/>
            <person name="Baldwin A."/>
            <person name="Dowson C."/>
            <person name="Barrell B.G."/>
            <person name="Govan J.R."/>
            <person name="Vandamme P."/>
            <person name="Hart C.A."/>
            <person name="Mahenthiralingam E."/>
            <person name="Parkhill J."/>
        </authorList>
    </citation>
    <scope>NUCLEOTIDE SEQUENCE [LARGE SCALE GENOMIC DNA]</scope>
    <source>
        <strain>ATCC BAA-245 / DSM 16553 / LMG 16656 / NCTC 13227 / J2315 / CF5610</strain>
    </source>
</reference>
<keyword id="KW-0479">Metal-binding</keyword>
<keyword id="KW-0560">Oxidoreductase</keyword>
<keyword id="KW-0862">Zinc</keyword>
<feature type="chain" id="PRO_1000145354" description="Peptide methionine sulfoxide reductase MsrB">
    <location>
        <begin position="1"/>
        <end position="143"/>
    </location>
</feature>
<feature type="domain" description="MsrB" evidence="2">
    <location>
        <begin position="16"/>
        <end position="139"/>
    </location>
</feature>
<feature type="active site" description="Nucleophile" evidence="2">
    <location>
        <position position="128"/>
    </location>
</feature>
<feature type="binding site" evidence="2">
    <location>
        <position position="55"/>
    </location>
    <ligand>
        <name>Zn(2+)</name>
        <dbReference type="ChEBI" id="CHEBI:29105"/>
    </ligand>
</feature>
<feature type="binding site" evidence="2">
    <location>
        <position position="58"/>
    </location>
    <ligand>
        <name>Zn(2+)</name>
        <dbReference type="ChEBI" id="CHEBI:29105"/>
    </ligand>
</feature>
<feature type="binding site" evidence="2">
    <location>
        <position position="104"/>
    </location>
    <ligand>
        <name>Zn(2+)</name>
        <dbReference type="ChEBI" id="CHEBI:29105"/>
    </ligand>
</feature>
<feature type="binding site" evidence="2">
    <location>
        <position position="107"/>
    </location>
    <ligand>
        <name>Zn(2+)</name>
        <dbReference type="ChEBI" id="CHEBI:29105"/>
    </ligand>
</feature>
<sequence length="143" mass="16230">MSHDSDDKTFPYQKDDAELRRRLTPMQYEVTQHAATERAFTGEYTDTEDAGIYKCVVCSTPLFESGAKFHSGCGWPSYFKPLNGEVIDEKIDYSHGMVRVEVRCNHCGAHLGHVFEDGPRDKTGLRYCINSAALNFESRPENE</sequence>
<organism>
    <name type="scientific">Burkholderia cenocepacia (strain ATCC BAA-245 / DSM 16553 / LMG 16656 / NCTC 13227 / J2315 / CF5610)</name>
    <name type="common">Burkholderia cepacia (strain J2315)</name>
    <dbReference type="NCBI Taxonomy" id="216591"/>
    <lineage>
        <taxon>Bacteria</taxon>
        <taxon>Pseudomonadati</taxon>
        <taxon>Pseudomonadota</taxon>
        <taxon>Betaproteobacteria</taxon>
        <taxon>Burkholderiales</taxon>
        <taxon>Burkholderiaceae</taxon>
        <taxon>Burkholderia</taxon>
        <taxon>Burkholderia cepacia complex</taxon>
    </lineage>
</organism>
<comment type="catalytic activity">
    <reaction evidence="1">
        <text>L-methionyl-[protein] + [thioredoxin]-disulfide + H2O = L-methionyl-(R)-S-oxide-[protein] + [thioredoxin]-dithiol</text>
        <dbReference type="Rhea" id="RHEA:24164"/>
        <dbReference type="Rhea" id="RHEA-COMP:10698"/>
        <dbReference type="Rhea" id="RHEA-COMP:10700"/>
        <dbReference type="Rhea" id="RHEA-COMP:12313"/>
        <dbReference type="Rhea" id="RHEA-COMP:12314"/>
        <dbReference type="ChEBI" id="CHEBI:15377"/>
        <dbReference type="ChEBI" id="CHEBI:16044"/>
        <dbReference type="ChEBI" id="CHEBI:29950"/>
        <dbReference type="ChEBI" id="CHEBI:45764"/>
        <dbReference type="ChEBI" id="CHEBI:50058"/>
        <dbReference type="EC" id="1.8.4.12"/>
    </reaction>
</comment>
<comment type="cofactor">
    <cofactor evidence="1">
        <name>Zn(2+)</name>
        <dbReference type="ChEBI" id="CHEBI:29105"/>
    </cofactor>
    <text evidence="1">Binds 1 zinc ion per subunit. The zinc ion is important for the structural integrity of the protein.</text>
</comment>
<comment type="similarity">
    <text evidence="1">Belongs to the MsrB Met sulfoxide reductase family.</text>
</comment>
<dbReference type="EC" id="1.8.4.12" evidence="1"/>
<dbReference type="EMBL" id="AM747720">
    <property type="protein sequence ID" value="CAR52282.1"/>
    <property type="molecule type" value="Genomic_DNA"/>
</dbReference>
<dbReference type="RefSeq" id="WP_006483891.1">
    <property type="nucleotide sequence ID" value="NC_011000.1"/>
</dbReference>
<dbReference type="SMR" id="B4EBK9"/>
<dbReference type="GeneID" id="56558461"/>
<dbReference type="KEGG" id="bcj:BCAL1982"/>
<dbReference type="eggNOG" id="COG0229">
    <property type="taxonomic scope" value="Bacteria"/>
</dbReference>
<dbReference type="HOGENOM" id="CLU_031040_8_5_4"/>
<dbReference type="BioCyc" id="BCEN216591:G1G1V-2175-MONOMER"/>
<dbReference type="Proteomes" id="UP000001035">
    <property type="component" value="Chromosome 1"/>
</dbReference>
<dbReference type="GO" id="GO:0005737">
    <property type="term" value="C:cytoplasm"/>
    <property type="evidence" value="ECO:0007669"/>
    <property type="project" value="TreeGrafter"/>
</dbReference>
<dbReference type="GO" id="GO:0033743">
    <property type="term" value="F:peptide-methionine (R)-S-oxide reductase activity"/>
    <property type="evidence" value="ECO:0007669"/>
    <property type="project" value="UniProtKB-UniRule"/>
</dbReference>
<dbReference type="GO" id="GO:0008270">
    <property type="term" value="F:zinc ion binding"/>
    <property type="evidence" value="ECO:0007669"/>
    <property type="project" value="UniProtKB-UniRule"/>
</dbReference>
<dbReference type="GO" id="GO:0030091">
    <property type="term" value="P:protein repair"/>
    <property type="evidence" value="ECO:0007669"/>
    <property type="project" value="InterPro"/>
</dbReference>
<dbReference type="GO" id="GO:0006979">
    <property type="term" value="P:response to oxidative stress"/>
    <property type="evidence" value="ECO:0007669"/>
    <property type="project" value="InterPro"/>
</dbReference>
<dbReference type="FunFam" id="2.170.150.20:FF:000003">
    <property type="entry name" value="Peptide methionine sulfoxide reductase MsrB"/>
    <property type="match status" value="1"/>
</dbReference>
<dbReference type="Gene3D" id="2.170.150.20">
    <property type="entry name" value="Peptide methionine sulfoxide reductase"/>
    <property type="match status" value="1"/>
</dbReference>
<dbReference type="HAMAP" id="MF_01400">
    <property type="entry name" value="MsrB"/>
    <property type="match status" value="1"/>
</dbReference>
<dbReference type="InterPro" id="IPR028427">
    <property type="entry name" value="Met_Sox_Rdtase_MsrB"/>
</dbReference>
<dbReference type="InterPro" id="IPR002579">
    <property type="entry name" value="Met_Sox_Rdtase_MsrB_dom"/>
</dbReference>
<dbReference type="InterPro" id="IPR011057">
    <property type="entry name" value="Mss4-like_sf"/>
</dbReference>
<dbReference type="NCBIfam" id="TIGR00357">
    <property type="entry name" value="peptide-methionine (R)-S-oxide reductase MsrB"/>
    <property type="match status" value="1"/>
</dbReference>
<dbReference type="PANTHER" id="PTHR10173">
    <property type="entry name" value="METHIONINE SULFOXIDE REDUCTASE"/>
    <property type="match status" value="1"/>
</dbReference>
<dbReference type="PANTHER" id="PTHR10173:SF52">
    <property type="entry name" value="METHIONINE-R-SULFOXIDE REDUCTASE B1"/>
    <property type="match status" value="1"/>
</dbReference>
<dbReference type="Pfam" id="PF01641">
    <property type="entry name" value="SelR"/>
    <property type="match status" value="1"/>
</dbReference>
<dbReference type="SUPFAM" id="SSF51316">
    <property type="entry name" value="Mss4-like"/>
    <property type="match status" value="1"/>
</dbReference>
<dbReference type="PROSITE" id="PS51790">
    <property type="entry name" value="MSRB"/>
    <property type="match status" value="1"/>
</dbReference>
<protein>
    <recommendedName>
        <fullName evidence="1">Peptide methionine sulfoxide reductase MsrB</fullName>
        <ecNumber evidence="1">1.8.4.12</ecNumber>
    </recommendedName>
    <alternativeName>
        <fullName evidence="1">Peptide-methionine (R)-S-oxide reductase</fullName>
    </alternativeName>
</protein>
<evidence type="ECO:0000255" key="1">
    <source>
        <dbReference type="HAMAP-Rule" id="MF_01400"/>
    </source>
</evidence>
<evidence type="ECO:0000255" key="2">
    <source>
        <dbReference type="PROSITE-ProRule" id="PRU01126"/>
    </source>
</evidence>
<name>MSRB_BURCJ</name>
<gene>
    <name evidence="1" type="primary">msrB</name>
    <name type="ordered locus">BceJ2315_19450</name>
    <name type="ORF">BCAL1982</name>
</gene>